<feature type="chain" id="PRO_1000074699" description="Aspartate--tRNA(Asp/Asn) ligase">
    <location>
        <begin position="1"/>
        <end position="590"/>
    </location>
</feature>
<feature type="region of interest" description="Aspartate" evidence="1">
    <location>
        <begin position="197"/>
        <end position="200"/>
    </location>
</feature>
<feature type="binding site" evidence="1">
    <location>
        <position position="173"/>
    </location>
    <ligand>
        <name>L-aspartate</name>
        <dbReference type="ChEBI" id="CHEBI:29991"/>
    </ligand>
</feature>
<feature type="binding site" evidence="1">
    <location>
        <begin position="219"/>
        <end position="221"/>
    </location>
    <ligand>
        <name>ATP</name>
        <dbReference type="ChEBI" id="CHEBI:30616"/>
    </ligand>
</feature>
<feature type="binding site" evidence="1">
    <location>
        <position position="219"/>
    </location>
    <ligand>
        <name>L-aspartate</name>
        <dbReference type="ChEBI" id="CHEBI:29991"/>
    </ligand>
</feature>
<feature type="binding site" evidence="1">
    <location>
        <position position="228"/>
    </location>
    <ligand>
        <name>ATP</name>
        <dbReference type="ChEBI" id="CHEBI:30616"/>
    </ligand>
</feature>
<feature type="binding site" evidence="1">
    <location>
        <position position="450"/>
    </location>
    <ligand>
        <name>L-aspartate</name>
        <dbReference type="ChEBI" id="CHEBI:29991"/>
    </ligand>
</feature>
<feature type="binding site" evidence="1">
    <location>
        <position position="484"/>
    </location>
    <ligand>
        <name>ATP</name>
        <dbReference type="ChEBI" id="CHEBI:30616"/>
    </ligand>
</feature>
<feature type="binding site" evidence="1">
    <location>
        <position position="491"/>
    </location>
    <ligand>
        <name>L-aspartate</name>
        <dbReference type="ChEBI" id="CHEBI:29991"/>
    </ligand>
</feature>
<feature type="binding site" evidence="1">
    <location>
        <begin position="536"/>
        <end position="539"/>
    </location>
    <ligand>
        <name>ATP</name>
        <dbReference type="ChEBI" id="CHEBI:30616"/>
    </ligand>
</feature>
<feature type="site" description="Important for tRNA non-discrimination" evidence="1">
    <location>
        <position position="30"/>
    </location>
</feature>
<feature type="site" description="Important for tRNA non-discrimination" evidence="1">
    <location>
        <position position="81"/>
    </location>
</feature>
<gene>
    <name evidence="1" type="primary">aspS</name>
    <name type="ordered locus">COXBURSA331_A1751</name>
</gene>
<accession>A9N999</accession>
<sequence length="590" mass="66789">MRTHYADKVDSSLIDQTITLCGWVHRRRDHGGLIFIDLRDREGLVQVVCNPTESTVFKVAESLRNEYVIKVTGKVHKRPEGTVNPHIPSGEVEIAASDITLLNKSKPLPFNIDEYQEVSEEVRLKFRYLDLRRPEVAQRLKMRSYIIREIRRFLDERGFLDIETPMLTKSTPEGARDYLVPSRTHPGQFFALPQSPQIFKEILMVAGFDRYYQIVRCFRDEDLRADRQPEFTQLDLEMSFVEEKDIQQLMETMIRHLFSTFLNVPLPDPFPRITYDEAIKTYGTDRPDLRNPLTLVDVTDLMKSVEFKVFKEPANNPHGRIAVLRLPKGAELSRKAIDDYTQFVGIYGAKGLAYIKVENIDNGTGGLHSPILKFLPENVIAEILKRTQAQSGDILFFGADKAKIVNESLGALRDRLCADLNLYEGQWKPVWVVDFPMFDREDVGDWQALHHPFTALQETDPEKVIANPGDVLSRAYDMVLNGSEIGGGSIRINDIGMQYAVFKVLGISKEMAEAQFGHLLMALQFGSPPLGGIAFGLDRLVAIMTGASSIRDVIAFPKTQTAQCPLTNAPAQVETLQLETLGLKVSKHRK</sequence>
<evidence type="ECO:0000255" key="1">
    <source>
        <dbReference type="HAMAP-Rule" id="MF_00044"/>
    </source>
</evidence>
<name>SYDND_COXBR</name>
<organism>
    <name type="scientific">Coxiella burnetii (strain RSA 331 / Henzerling II)</name>
    <dbReference type="NCBI Taxonomy" id="360115"/>
    <lineage>
        <taxon>Bacteria</taxon>
        <taxon>Pseudomonadati</taxon>
        <taxon>Pseudomonadota</taxon>
        <taxon>Gammaproteobacteria</taxon>
        <taxon>Legionellales</taxon>
        <taxon>Coxiellaceae</taxon>
        <taxon>Coxiella</taxon>
    </lineage>
</organism>
<comment type="function">
    <text evidence="1">Aspartyl-tRNA synthetase with relaxed tRNA specificity since it is able to aspartylate not only its cognate tRNA(Asp) but also tRNA(Asn). Reaction proceeds in two steps: L-aspartate is first activated by ATP to form Asp-AMP and then transferred to the acceptor end of tRNA(Asp/Asn).</text>
</comment>
<comment type="catalytic activity">
    <reaction evidence="1">
        <text>tRNA(Asx) + L-aspartate + ATP = L-aspartyl-tRNA(Asx) + AMP + diphosphate</text>
        <dbReference type="Rhea" id="RHEA:18349"/>
        <dbReference type="Rhea" id="RHEA-COMP:9710"/>
        <dbReference type="Rhea" id="RHEA-COMP:9711"/>
        <dbReference type="ChEBI" id="CHEBI:29991"/>
        <dbReference type="ChEBI" id="CHEBI:30616"/>
        <dbReference type="ChEBI" id="CHEBI:33019"/>
        <dbReference type="ChEBI" id="CHEBI:78442"/>
        <dbReference type="ChEBI" id="CHEBI:78516"/>
        <dbReference type="ChEBI" id="CHEBI:456215"/>
        <dbReference type="EC" id="6.1.1.23"/>
    </reaction>
</comment>
<comment type="subunit">
    <text evidence="1">Homodimer.</text>
</comment>
<comment type="subcellular location">
    <subcellularLocation>
        <location evidence="1">Cytoplasm</location>
    </subcellularLocation>
</comment>
<comment type="similarity">
    <text evidence="1">Belongs to the class-II aminoacyl-tRNA synthetase family. Type 1 subfamily.</text>
</comment>
<reference key="1">
    <citation type="submission" date="2007-11" db="EMBL/GenBank/DDBJ databases">
        <title>Genome sequencing of phylogenetically and phenotypically diverse Coxiella burnetii isolates.</title>
        <authorList>
            <person name="Seshadri R."/>
            <person name="Samuel J.E."/>
        </authorList>
    </citation>
    <scope>NUCLEOTIDE SEQUENCE [LARGE SCALE GENOMIC DNA]</scope>
    <source>
        <strain>RSA 331 / Henzerling II</strain>
    </source>
</reference>
<keyword id="KW-0030">Aminoacyl-tRNA synthetase</keyword>
<keyword id="KW-0067">ATP-binding</keyword>
<keyword id="KW-0963">Cytoplasm</keyword>
<keyword id="KW-0436">Ligase</keyword>
<keyword id="KW-0547">Nucleotide-binding</keyword>
<keyword id="KW-0648">Protein biosynthesis</keyword>
<protein>
    <recommendedName>
        <fullName evidence="1">Aspartate--tRNA(Asp/Asn) ligase</fullName>
        <ecNumber evidence="1">6.1.1.23</ecNumber>
    </recommendedName>
    <alternativeName>
        <fullName evidence="1">Aspartyl-tRNA synthetase</fullName>
        <shortName evidence="1">AspRS</shortName>
    </alternativeName>
    <alternativeName>
        <fullName evidence="1">Non-discriminating aspartyl-tRNA synthetase</fullName>
        <shortName evidence="1">ND-AspRS</shortName>
    </alternativeName>
</protein>
<dbReference type="EC" id="6.1.1.23" evidence="1"/>
<dbReference type="EMBL" id="CP000890">
    <property type="protein sequence ID" value="ABX78210.1"/>
    <property type="molecule type" value="Genomic_DNA"/>
</dbReference>
<dbReference type="SMR" id="A9N999"/>
<dbReference type="KEGG" id="cbs:COXBURSA331_A1751"/>
<dbReference type="HOGENOM" id="CLU_014330_3_2_6"/>
<dbReference type="GO" id="GO:0005737">
    <property type="term" value="C:cytoplasm"/>
    <property type="evidence" value="ECO:0007669"/>
    <property type="project" value="UniProtKB-SubCell"/>
</dbReference>
<dbReference type="GO" id="GO:0004815">
    <property type="term" value="F:aspartate-tRNA ligase activity"/>
    <property type="evidence" value="ECO:0007669"/>
    <property type="project" value="UniProtKB-UniRule"/>
</dbReference>
<dbReference type="GO" id="GO:0050560">
    <property type="term" value="F:aspartate-tRNA(Asn) ligase activity"/>
    <property type="evidence" value="ECO:0007669"/>
    <property type="project" value="UniProtKB-EC"/>
</dbReference>
<dbReference type="GO" id="GO:0005524">
    <property type="term" value="F:ATP binding"/>
    <property type="evidence" value="ECO:0007669"/>
    <property type="project" value="UniProtKB-UniRule"/>
</dbReference>
<dbReference type="GO" id="GO:0003676">
    <property type="term" value="F:nucleic acid binding"/>
    <property type="evidence" value="ECO:0007669"/>
    <property type="project" value="InterPro"/>
</dbReference>
<dbReference type="GO" id="GO:0006422">
    <property type="term" value="P:aspartyl-tRNA aminoacylation"/>
    <property type="evidence" value="ECO:0007669"/>
    <property type="project" value="UniProtKB-UniRule"/>
</dbReference>
<dbReference type="CDD" id="cd00777">
    <property type="entry name" value="AspRS_core"/>
    <property type="match status" value="1"/>
</dbReference>
<dbReference type="CDD" id="cd04317">
    <property type="entry name" value="EcAspRS_like_N"/>
    <property type="match status" value="1"/>
</dbReference>
<dbReference type="Gene3D" id="3.30.930.10">
    <property type="entry name" value="Bira Bifunctional Protein, Domain 2"/>
    <property type="match status" value="1"/>
</dbReference>
<dbReference type="Gene3D" id="3.30.1360.30">
    <property type="entry name" value="GAD-like domain"/>
    <property type="match status" value="1"/>
</dbReference>
<dbReference type="Gene3D" id="2.40.50.140">
    <property type="entry name" value="Nucleic acid-binding proteins"/>
    <property type="match status" value="1"/>
</dbReference>
<dbReference type="HAMAP" id="MF_00044">
    <property type="entry name" value="Asp_tRNA_synth_type1"/>
    <property type="match status" value="1"/>
</dbReference>
<dbReference type="InterPro" id="IPR004364">
    <property type="entry name" value="Aa-tRNA-synt_II"/>
</dbReference>
<dbReference type="InterPro" id="IPR006195">
    <property type="entry name" value="aa-tRNA-synth_II"/>
</dbReference>
<dbReference type="InterPro" id="IPR045864">
    <property type="entry name" value="aa-tRNA-synth_II/BPL/LPL"/>
</dbReference>
<dbReference type="InterPro" id="IPR004524">
    <property type="entry name" value="Asp-tRNA-ligase_1"/>
</dbReference>
<dbReference type="InterPro" id="IPR047089">
    <property type="entry name" value="Asp-tRNA-ligase_1_N"/>
</dbReference>
<dbReference type="InterPro" id="IPR002312">
    <property type="entry name" value="Asp/Asn-tRNA-synth_IIb"/>
</dbReference>
<dbReference type="InterPro" id="IPR047090">
    <property type="entry name" value="AspRS_core"/>
</dbReference>
<dbReference type="InterPro" id="IPR004115">
    <property type="entry name" value="GAD-like_sf"/>
</dbReference>
<dbReference type="InterPro" id="IPR029351">
    <property type="entry name" value="GAD_dom"/>
</dbReference>
<dbReference type="InterPro" id="IPR012340">
    <property type="entry name" value="NA-bd_OB-fold"/>
</dbReference>
<dbReference type="InterPro" id="IPR004365">
    <property type="entry name" value="NA-bd_OB_tRNA"/>
</dbReference>
<dbReference type="NCBIfam" id="TIGR00459">
    <property type="entry name" value="aspS_bact"/>
    <property type="match status" value="1"/>
</dbReference>
<dbReference type="NCBIfam" id="NF001750">
    <property type="entry name" value="PRK00476.1"/>
    <property type="match status" value="1"/>
</dbReference>
<dbReference type="PANTHER" id="PTHR22594:SF5">
    <property type="entry name" value="ASPARTATE--TRNA LIGASE, MITOCHONDRIAL"/>
    <property type="match status" value="1"/>
</dbReference>
<dbReference type="PANTHER" id="PTHR22594">
    <property type="entry name" value="ASPARTYL/LYSYL-TRNA SYNTHETASE"/>
    <property type="match status" value="1"/>
</dbReference>
<dbReference type="Pfam" id="PF02938">
    <property type="entry name" value="GAD"/>
    <property type="match status" value="1"/>
</dbReference>
<dbReference type="Pfam" id="PF00152">
    <property type="entry name" value="tRNA-synt_2"/>
    <property type="match status" value="1"/>
</dbReference>
<dbReference type="Pfam" id="PF01336">
    <property type="entry name" value="tRNA_anti-codon"/>
    <property type="match status" value="1"/>
</dbReference>
<dbReference type="PRINTS" id="PR01042">
    <property type="entry name" value="TRNASYNTHASP"/>
</dbReference>
<dbReference type="SUPFAM" id="SSF55681">
    <property type="entry name" value="Class II aaRS and biotin synthetases"/>
    <property type="match status" value="1"/>
</dbReference>
<dbReference type="SUPFAM" id="SSF55261">
    <property type="entry name" value="GAD domain-like"/>
    <property type="match status" value="1"/>
</dbReference>
<dbReference type="SUPFAM" id="SSF50249">
    <property type="entry name" value="Nucleic acid-binding proteins"/>
    <property type="match status" value="1"/>
</dbReference>
<dbReference type="PROSITE" id="PS50862">
    <property type="entry name" value="AA_TRNA_LIGASE_II"/>
    <property type="match status" value="1"/>
</dbReference>
<proteinExistence type="inferred from homology"/>